<reference key="1">
    <citation type="journal article" date="2002" name="Nucleic Acids Res.">
        <title>Genome sequence of Oceanobacillus iheyensis isolated from the Iheya Ridge and its unexpected adaptive capabilities to extreme environments.</title>
        <authorList>
            <person name="Takami H."/>
            <person name="Takaki Y."/>
            <person name="Uchiyama I."/>
        </authorList>
    </citation>
    <scope>NUCLEOTIDE SEQUENCE [LARGE SCALE GENOMIC DNA]</scope>
    <source>
        <strain>DSM 14371 / CIP 107618 / JCM 11309 / KCTC 3954 / HTE831</strain>
    </source>
</reference>
<protein>
    <recommendedName>
        <fullName evidence="1">Alanine racemase 2</fullName>
        <ecNumber evidence="1">5.1.1.1</ecNumber>
    </recommendedName>
</protein>
<sequence>MIQGSYRDTWTEVSLDAIHHNVTAFKNHIDHHTKLMAVVKADGYGHGAVEVAQEALTAGADYLAVAILDEAIQLRDAGIDAPLLVLGYTHPDGLKTAIEQQITLTVFTKEDAEQVKIAAELLQKTARIHLKIESGMNRIGIATKEEAVEIAKALHSSFVMLEGAFTHFADADNTDPTYTEMQFHRFNQIISHLRTHCHIPIVHCCNTAATIAYPDMHLDMVRVGIGIYGLYPETHLKELIDLKQAMSLKTKPVYIKTVDQDTAISYGLTFTTERKSTIATMPIGYADGFSRLLSNRGDVIVHAGRAPIVGRICMDQSMIDVTDVENVGLDDVITIFGEPTEGYIAMEEVANLMGTIHYETACLIGKRVPRIYMRQSEAVNYKGLVEKEPVTS</sequence>
<comment type="function">
    <text evidence="1">Catalyzes the interconversion of L-alanine and D-alanine. May also act on other amino acids.</text>
</comment>
<comment type="catalytic activity">
    <reaction evidence="1">
        <text>L-alanine = D-alanine</text>
        <dbReference type="Rhea" id="RHEA:20249"/>
        <dbReference type="ChEBI" id="CHEBI:57416"/>
        <dbReference type="ChEBI" id="CHEBI:57972"/>
        <dbReference type="EC" id="5.1.1.1"/>
    </reaction>
</comment>
<comment type="cofactor">
    <cofactor evidence="1">
        <name>pyridoxal 5'-phosphate</name>
        <dbReference type="ChEBI" id="CHEBI:597326"/>
    </cofactor>
</comment>
<comment type="pathway">
    <text evidence="1">Amino-acid biosynthesis; D-alanine biosynthesis; D-alanine from L-alanine: step 1/1.</text>
</comment>
<comment type="similarity">
    <text evidence="1">Belongs to the alanine racemase family.</text>
</comment>
<dbReference type="EC" id="5.1.1.1" evidence="1"/>
<dbReference type="EMBL" id="BA000028">
    <property type="protein sequence ID" value="BAC15182.1"/>
    <property type="molecule type" value="Genomic_DNA"/>
</dbReference>
<dbReference type="RefSeq" id="WP_011067622.1">
    <property type="nucleotide sequence ID" value="NC_004193.1"/>
</dbReference>
<dbReference type="SMR" id="Q8ELK1"/>
<dbReference type="STRING" id="221109.gene:10735478"/>
<dbReference type="KEGG" id="oih:OB3226"/>
<dbReference type="eggNOG" id="COG0787">
    <property type="taxonomic scope" value="Bacteria"/>
</dbReference>
<dbReference type="HOGENOM" id="CLU_028393_2_1_9"/>
<dbReference type="OrthoDB" id="9813814at2"/>
<dbReference type="PhylomeDB" id="Q8ELK1"/>
<dbReference type="UniPathway" id="UPA00042">
    <property type="reaction ID" value="UER00497"/>
</dbReference>
<dbReference type="Proteomes" id="UP000000822">
    <property type="component" value="Chromosome"/>
</dbReference>
<dbReference type="GO" id="GO:0005829">
    <property type="term" value="C:cytosol"/>
    <property type="evidence" value="ECO:0007669"/>
    <property type="project" value="TreeGrafter"/>
</dbReference>
<dbReference type="GO" id="GO:0008784">
    <property type="term" value="F:alanine racemase activity"/>
    <property type="evidence" value="ECO:0007669"/>
    <property type="project" value="UniProtKB-UniRule"/>
</dbReference>
<dbReference type="GO" id="GO:0030170">
    <property type="term" value="F:pyridoxal phosphate binding"/>
    <property type="evidence" value="ECO:0007669"/>
    <property type="project" value="UniProtKB-UniRule"/>
</dbReference>
<dbReference type="GO" id="GO:0030632">
    <property type="term" value="P:D-alanine biosynthetic process"/>
    <property type="evidence" value="ECO:0007669"/>
    <property type="project" value="UniProtKB-UniRule"/>
</dbReference>
<dbReference type="GO" id="GO:0009252">
    <property type="term" value="P:peptidoglycan biosynthetic process"/>
    <property type="evidence" value="ECO:0007669"/>
    <property type="project" value="TreeGrafter"/>
</dbReference>
<dbReference type="CDD" id="cd00430">
    <property type="entry name" value="PLPDE_III_AR"/>
    <property type="match status" value="1"/>
</dbReference>
<dbReference type="FunFam" id="3.20.20.10:FF:000002">
    <property type="entry name" value="Alanine racemase"/>
    <property type="match status" value="1"/>
</dbReference>
<dbReference type="Gene3D" id="3.20.20.10">
    <property type="entry name" value="Alanine racemase"/>
    <property type="match status" value="1"/>
</dbReference>
<dbReference type="Gene3D" id="2.40.37.10">
    <property type="entry name" value="Lyase, Ornithine Decarboxylase, Chain A, domain 1"/>
    <property type="match status" value="1"/>
</dbReference>
<dbReference type="HAMAP" id="MF_01201">
    <property type="entry name" value="Ala_racemase"/>
    <property type="match status" value="1"/>
</dbReference>
<dbReference type="InterPro" id="IPR000821">
    <property type="entry name" value="Ala_racemase"/>
</dbReference>
<dbReference type="InterPro" id="IPR009006">
    <property type="entry name" value="Ala_racemase/Decarboxylase_C"/>
</dbReference>
<dbReference type="InterPro" id="IPR011079">
    <property type="entry name" value="Ala_racemase_C"/>
</dbReference>
<dbReference type="InterPro" id="IPR001608">
    <property type="entry name" value="Ala_racemase_N"/>
</dbReference>
<dbReference type="InterPro" id="IPR020622">
    <property type="entry name" value="Ala_racemase_pyridoxalP-BS"/>
</dbReference>
<dbReference type="InterPro" id="IPR029066">
    <property type="entry name" value="PLP-binding_barrel"/>
</dbReference>
<dbReference type="NCBIfam" id="TIGR00492">
    <property type="entry name" value="alr"/>
    <property type="match status" value="1"/>
</dbReference>
<dbReference type="PANTHER" id="PTHR30511">
    <property type="entry name" value="ALANINE RACEMASE"/>
    <property type="match status" value="1"/>
</dbReference>
<dbReference type="PANTHER" id="PTHR30511:SF0">
    <property type="entry name" value="ALANINE RACEMASE, CATABOLIC-RELATED"/>
    <property type="match status" value="1"/>
</dbReference>
<dbReference type="Pfam" id="PF00842">
    <property type="entry name" value="Ala_racemase_C"/>
    <property type="match status" value="1"/>
</dbReference>
<dbReference type="Pfam" id="PF01168">
    <property type="entry name" value="Ala_racemase_N"/>
    <property type="match status" value="1"/>
</dbReference>
<dbReference type="PRINTS" id="PR00992">
    <property type="entry name" value="ALARACEMASE"/>
</dbReference>
<dbReference type="SMART" id="SM01005">
    <property type="entry name" value="Ala_racemase_C"/>
    <property type="match status" value="1"/>
</dbReference>
<dbReference type="SUPFAM" id="SSF50621">
    <property type="entry name" value="Alanine racemase C-terminal domain-like"/>
    <property type="match status" value="1"/>
</dbReference>
<dbReference type="SUPFAM" id="SSF51419">
    <property type="entry name" value="PLP-binding barrel"/>
    <property type="match status" value="1"/>
</dbReference>
<dbReference type="PROSITE" id="PS00395">
    <property type="entry name" value="ALANINE_RACEMASE"/>
    <property type="match status" value="1"/>
</dbReference>
<accession>Q8ELK1</accession>
<keyword id="KW-0413">Isomerase</keyword>
<keyword id="KW-0663">Pyridoxal phosphate</keyword>
<keyword id="KW-1185">Reference proteome</keyword>
<evidence type="ECO:0000255" key="1">
    <source>
        <dbReference type="HAMAP-Rule" id="MF_01201"/>
    </source>
</evidence>
<name>ALR2_OCEIH</name>
<proteinExistence type="inferred from homology"/>
<gene>
    <name type="primary">alr2</name>
    <name type="ordered locus">OB3226</name>
</gene>
<organism>
    <name type="scientific">Oceanobacillus iheyensis (strain DSM 14371 / CIP 107618 / JCM 11309 / KCTC 3954 / HTE831)</name>
    <dbReference type="NCBI Taxonomy" id="221109"/>
    <lineage>
        <taxon>Bacteria</taxon>
        <taxon>Bacillati</taxon>
        <taxon>Bacillota</taxon>
        <taxon>Bacilli</taxon>
        <taxon>Bacillales</taxon>
        <taxon>Bacillaceae</taxon>
        <taxon>Oceanobacillus</taxon>
    </lineage>
</organism>
<feature type="chain" id="PRO_0000114543" description="Alanine racemase 2">
    <location>
        <begin position="1"/>
        <end position="392"/>
    </location>
</feature>
<feature type="active site" description="Proton acceptor; specific for D-alanine" evidence="1">
    <location>
        <position position="40"/>
    </location>
</feature>
<feature type="active site" description="Proton acceptor; specific for L-alanine" evidence="1">
    <location>
        <position position="266"/>
    </location>
</feature>
<feature type="binding site" evidence="1">
    <location>
        <position position="138"/>
    </location>
    <ligand>
        <name>substrate</name>
    </ligand>
</feature>
<feature type="binding site" evidence="1">
    <location>
        <position position="314"/>
    </location>
    <ligand>
        <name>substrate</name>
    </ligand>
</feature>
<feature type="modified residue" description="N6-(pyridoxal phosphate)lysine" evidence="1">
    <location>
        <position position="40"/>
    </location>
</feature>